<feature type="chain" id="PRO_0000091846" description="Forkhead box protein I1">
    <location>
        <begin position="1"/>
        <end position="378"/>
    </location>
</feature>
<feature type="DNA-binding region" description="Fork-head" evidence="2">
    <location>
        <begin position="123"/>
        <end position="217"/>
    </location>
</feature>
<feature type="region of interest" description="Disordered" evidence="3">
    <location>
        <begin position="1"/>
        <end position="26"/>
    </location>
</feature>
<feature type="region of interest" description="Disordered" evidence="3">
    <location>
        <begin position="208"/>
        <end position="278"/>
    </location>
</feature>
<feature type="compositionally biased region" description="Polar residues" evidence="3">
    <location>
        <begin position="236"/>
        <end position="248"/>
    </location>
</feature>
<feature type="splice variant" id="VSP_001543" description="In isoform 2." evidence="4 5">
    <location>
        <begin position="192"/>
        <end position="286"/>
    </location>
</feature>
<feature type="sequence variant" id="VAR_049160" description="In dbSNP:rs377539902.">
    <original>P</original>
    <variation>S</variation>
    <location>
        <position position="243"/>
    </location>
</feature>
<feature type="sequence variant" id="VAR_049161" description="In dbSNP:rs3828625.">
    <original>N</original>
    <variation>S</variation>
    <location>
        <position position="362"/>
    </location>
</feature>
<feature type="sequence conflict" description="In Ref. 2; AAB50574." evidence="6" ref="2">
    <original>SSF</original>
    <variation>NSG</variation>
    <location>
        <begin position="2"/>
        <end position="4"/>
    </location>
</feature>
<comment type="function">
    <text evidence="1">Transcriptional activator required for the development of normal hearing, sense of balance and kidney function. Required for the expression of SLC26A4/PDS, JAG1 and COCH in a subset of epithelial cells and the development of the endolymphatic system in the inner ear. Also required for the expression of SLC4A1/AE1, SLC4A9/AE4, ATP6V1B1 and the differentiation of intercalated cells in the epithelium of distal renal tubules (By similarity).</text>
</comment>
<comment type="interaction">
    <interactant intactId="EBI-12018822">
        <id>Q12951-2</id>
    </interactant>
    <interactant intactId="EBI-12102070">
        <id>Q9NXR5-2</id>
        <label>ANKRD10</label>
    </interactant>
    <organismsDiffer>false</organismsDiffer>
    <experiments>3</experiments>
</comment>
<comment type="interaction">
    <interactant intactId="EBI-12018822">
        <id>Q12951-2</id>
    </interactant>
    <interactant intactId="EBI-2117357">
        <id>P15289</id>
        <label>ARSA</label>
    </interactant>
    <organismsDiffer>false</organismsDiffer>
    <experiments>3</experiments>
</comment>
<comment type="interaction">
    <interactant intactId="EBI-12018822">
        <id>Q12951-2</id>
    </interactant>
    <interactant intactId="EBI-12811889">
        <id>Q9Y6H3</id>
        <label>ATP23</label>
    </interactant>
    <organismsDiffer>false</organismsDiffer>
    <experiments>3</experiments>
</comment>
<comment type="interaction">
    <interactant intactId="EBI-12018822">
        <id>Q12951-2</id>
    </interactant>
    <interactant intactId="EBI-742695">
        <id>Q8N1L9</id>
        <label>BATF2</label>
    </interactant>
    <organismsDiffer>false</organismsDiffer>
    <experiments>3</experiments>
</comment>
<comment type="interaction">
    <interactant intactId="EBI-12018822">
        <id>Q12951-2</id>
    </interactant>
    <interactant intactId="EBI-747012">
        <id>Q9H0L4</id>
        <label>CSTF2T</label>
    </interactant>
    <organismsDiffer>false</organismsDiffer>
    <experiments>3</experiments>
</comment>
<comment type="interaction">
    <interactant intactId="EBI-12018822">
        <id>Q12951-2</id>
    </interactant>
    <interactant intactId="EBI-740376">
        <id>Q86UW9</id>
        <label>DTX2</label>
    </interactant>
    <organismsDiffer>false</organismsDiffer>
    <experiments>3</experiments>
</comment>
<comment type="interaction">
    <interactant intactId="EBI-12018822">
        <id>Q12951-2</id>
    </interactant>
    <interactant intactId="EBI-12193763">
        <id>A1KXE4-2</id>
        <label>FAM168B</label>
    </interactant>
    <organismsDiffer>false</organismsDiffer>
    <experiments>3</experiments>
</comment>
<comment type="interaction">
    <interactant intactId="EBI-12018822">
        <id>Q12951-2</id>
    </interactant>
    <interactant intactId="EBI-1384254">
        <id>Q86UY5</id>
        <label>FAM83A</label>
    </interactant>
    <organismsDiffer>false</organismsDiffer>
    <experiments>3</experiments>
</comment>
<comment type="interaction">
    <interactant intactId="EBI-12018822">
        <id>Q12951-2</id>
    </interactant>
    <interactant intactId="EBI-740220">
        <id>O14964</id>
        <label>HGS</label>
    </interactant>
    <organismsDiffer>false</organismsDiffer>
    <experiments>3</experiments>
</comment>
<comment type="interaction">
    <interactant intactId="EBI-12018822">
        <id>Q12951-2</id>
    </interactant>
    <interactant intactId="EBI-12056251">
        <id>Q9ULV5-2</id>
        <label>HSF4</label>
    </interactant>
    <organismsDiffer>false</organismsDiffer>
    <experiments>3</experiments>
</comment>
<comment type="interaction">
    <interactant intactId="EBI-12018822">
        <id>Q12951-2</id>
    </interactant>
    <interactant intactId="EBI-9090173">
        <id>P0C870</id>
        <label>JMJD7</label>
    </interactant>
    <organismsDiffer>false</organismsDiffer>
    <experiments>3</experiments>
</comment>
<comment type="interaction">
    <interactant intactId="EBI-12018822">
        <id>Q12951-2</id>
    </interactant>
    <interactant intactId="EBI-12811111">
        <id>Q8IUB9</id>
        <label>KRTAP19-1</label>
    </interactant>
    <organismsDiffer>false</organismsDiffer>
    <experiments>3</experiments>
</comment>
<comment type="interaction">
    <interactant intactId="EBI-12018822">
        <id>Q12951-2</id>
    </interactant>
    <interactant intactId="EBI-10241353">
        <id>Q3SYF9</id>
        <label>KRTAP19-7</label>
    </interactant>
    <organismsDiffer>false</organismsDiffer>
    <experiments>3</experiments>
</comment>
<comment type="interaction">
    <interactant intactId="EBI-12018822">
        <id>Q12951-2</id>
    </interactant>
    <interactant intactId="EBI-716006">
        <id>Q9Y5V3</id>
        <label>MAGED1</label>
    </interactant>
    <organismsDiffer>false</organismsDiffer>
    <experiments>3</experiments>
</comment>
<comment type="interaction">
    <interactant intactId="EBI-12018822">
        <id>Q12951-2</id>
    </interactant>
    <interactant intactId="EBI-12853322">
        <id>P55197-2</id>
        <label>MLLT10</label>
    </interactant>
    <organismsDiffer>false</organismsDiffer>
    <experiments>3</experiments>
</comment>
<comment type="interaction">
    <interactant intactId="EBI-12018822">
        <id>Q12951-2</id>
    </interactant>
    <interactant intactId="EBI-10271199">
        <id>Q8NI38</id>
        <label>NFKBID</label>
    </interactant>
    <organismsDiffer>false</organismsDiffer>
    <experiments>3</experiments>
</comment>
<comment type="interaction">
    <interactant intactId="EBI-12018822">
        <id>Q12951-2</id>
    </interactant>
    <interactant intactId="EBI-714158">
        <id>Q13526</id>
        <label>PIN1</label>
    </interactant>
    <organismsDiffer>false</organismsDiffer>
    <experiments>3</experiments>
</comment>
<comment type="interaction">
    <interactant intactId="EBI-12018822">
        <id>Q12951-2</id>
    </interactant>
    <interactant intactId="EBI-744023">
        <id>Q9BTL3</id>
        <label>RAMAC</label>
    </interactant>
    <organismsDiffer>false</organismsDiffer>
    <experiments>3</experiments>
</comment>
<comment type="interaction">
    <interactant intactId="EBI-12018822">
        <id>Q12951-2</id>
    </interactant>
    <interactant intactId="EBI-10239812">
        <id>Q96M29</id>
        <label>TEKT5</label>
    </interactant>
    <organismsDiffer>false</organismsDiffer>
    <experiments>3</experiments>
</comment>
<comment type="interaction">
    <interactant intactId="EBI-12018822">
        <id>Q12951-2</id>
    </interactant>
    <interactant intactId="EBI-752030">
        <id>Q96A09</id>
        <label>TENT5B</label>
    </interactant>
    <organismsDiffer>false</organismsDiffer>
    <experiments>3</experiments>
</comment>
<comment type="interaction">
    <interactant intactId="EBI-12018822">
        <id>Q12951-2</id>
    </interactant>
    <interactant intactId="EBI-12068150">
        <id>Q6NVU6</id>
        <label>UFSP1</label>
    </interactant>
    <organismsDiffer>false</organismsDiffer>
    <experiments>3</experiments>
</comment>
<comment type="interaction">
    <interactant intactId="EBI-12018822">
        <id>Q12951-2</id>
    </interactant>
    <interactant intactId="EBI-11975223">
        <id>Q70EL1-9</id>
        <label>USP54</label>
    </interactant>
    <organismsDiffer>false</organismsDiffer>
    <experiments>3</experiments>
</comment>
<comment type="interaction">
    <interactant intactId="EBI-12018822">
        <id>Q12951-2</id>
    </interactant>
    <interactant intactId="EBI-2559305">
        <id>A5D8V6</id>
        <label>VPS37C</label>
    </interactant>
    <organismsDiffer>false</organismsDiffer>
    <experiments>6</experiments>
</comment>
<comment type="interaction">
    <interactant intactId="EBI-12018822">
        <id>Q12951-2</id>
    </interactant>
    <interactant intactId="EBI-12032042">
        <id>Q64LD2-2</id>
        <label>WDR25</label>
    </interactant>
    <organismsDiffer>false</organismsDiffer>
    <experiments>3</experiments>
</comment>
<comment type="interaction">
    <interactant intactId="EBI-12018822">
        <id>Q12951-2</id>
    </interactant>
    <interactant intactId="EBI-12040603">
        <id>Q9NZC7-5</id>
        <label>WWOX</label>
    </interactant>
    <organismsDiffer>false</organismsDiffer>
    <experiments>3</experiments>
</comment>
<comment type="subcellular location">
    <subcellularLocation>
        <location>Nucleus</location>
    </subcellularLocation>
</comment>
<comment type="alternative products">
    <event type="alternative splicing"/>
    <isoform>
        <id>Q12951-1</id>
        <name>1</name>
        <sequence type="displayed"/>
    </isoform>
    <isoform>
        <id>Q12951-2</id>
        <name>2</name>
        <sequence type="described" ref="VSP_001543"/>
    </isoform>
</comment>
<comment type="tissue specificity">
    <text>Expressed in kidney.</text>
</comment>
<comment type="sequence caution" evidence="6">
    <conflict type="erroneous initiation">
        <sequence resource="EMBL-CDS" id="AAB50574"/>
    </conflict>
</comment>
<comment type="sequence caution" evidence="6">
    <conflict type="erroneous initiation">
        <sequence resource="EMBL-CDS" id="AAU12169"/>
    </conflict>
</comment>
<name>FOXI1_HUMAN</name>
<protein>
    <recommendedName>
        <fullName>Forkhead box protein I1</fullName>
    </recommendedName>
    <alternativeName>
        <fullName>Forkhead-related protein FKHL10</fullName>
    </alternativeName>
    <alternativeName>
        <fullName>Forkhead-related transcription factor 6</fullName>
        <shortName>FREAC-6</shortName>
    </alternativeName>
    <alternativeName>
        <fullName>Hepatocyte nuclear factor 3 forkhead homolog 3</fullName>
        <shortName>HFH-3</shortName>
        <shortName>HNF-3/fork-head homolog 3</shortName>
    </alternativeName>
</protein>
<proteinExistence type="evidence at protein level"/>
<evidence type="ECO:0000250" key="1"/>
<evidence type="ECO:0000255" key="2">
    <source>
        <dbReference type="PROSITE-ProRule" id="PRU00089"/>
    </source>
</evidence>
<evidence type="ECO:0000256" key="3">
    <source>
        <dbReference type="SAM" id="MobiDB-lite"/>
    </source>
</evidence>
<evidence type="ECO:0000303" key="4">
    <source>
    </source>
</evidence>
<evidence type="ECO:0000303" key="5">
    <source ref="3"/>
</evidence>
<evidence type="ECO:0000305" key="6"/>
<gene>
    <name type="primary">FOXI1</name>
    <name type="synonym">FKHL10</name>
    <name type="synonym">FREAC6</name>
</gene>
<sequence>MSSFDLPAPSPPRCSPQFPSIGQEPPEMNLYYENFFHPQGVPSPQRPSFEGGGEYGATPNPYLWFNGPTMTPPPYLPGPNASPFLPQAYGVQRPLLPSVSGLGGSDLGWLPIPSQEELMKLVRPPYSYSALIAMAIHGAPDKRLTLSQIYQYVADNFPFYNKSKAGWQNSIRHNLSLNDCFKKVPRDEDDPGKGNYWTLDPNCEKMFDNGNFRRKRKRKSDVSSSTASLALEKTESSLPVDSPKTTEPQDILDGASPGGTTSSPEKRPSPPPSGAPCLNSFLSSMTAYVSGGSPTSHPLVTPGLSPEPSDKTGQNSLTFNSFSPLTNLSNHSGGGDWANPMPTNMLSYGGSVLSQFSPHFYNSVNTSGVLYPREGTEV</sequence>
<reference key="1">
    <citation type="journal article" date="2004" name="Genome Res.">
        <title>The status, quality, and expansion of the NIH full-length cDNA project: the Mammalian Gene Collection (MGC).</title>
        <authorList>
            <consortium name="The MGC Project Team"/>
        </authorList>
    </citation>
    <scope>NUCLEOTIDE SEQUENCE [LARGE SCALE MRNA] (ISOFORM 2)</scope>
    <source>
        <tissue>Colon</tissue>
        <tissue>Kidney</tissue>
    </source>
</reference>
<reference key="2">
    <citation type="journal article" date="1997" name="J. Biol. Chem.">
        <title>The winged helix transcriptional activator HFH-3 is expressed in the distal tubules of embryonic and adult mouse kidney.</title>
        <authorList>
            <person name="Overdier D.G."/>
            <person name="Ye H."/>
            <person name="Peterson R.S."/>
            <person name="Clevidence D.E."/>
            <person name="Costa R.H."/>
        </authorList>
    </citation>
    <scope>NUCLEOTIDE SEQUENCE [MRNA] OF 2-378 (ISOFORM 1)</scope>
    <source>
        <tissue>Kidney</tissue>
    </source>
</reference>
<reference key="3">
    <citation type="submission" date="2004-08" db="EMBL/GenBank/DDBJ databases">
        <authorList>
            <person name="Perez-Pinera P."/>
            <person name="Bray T.L."/>
            <person name="Vega J.A."/>
            <person name="Deuel T.F."/>
        </authorList>
    </citation>
    <scope>NUCLEOTIDE SEQUENCE [MRNA] OF 28-378 (ISOFORM 2)</scope>
</reference>
<reference key="4">
    <citation type="journal article" date="1994" name="EMBO J.">
        <title>Cloning and characterization of seven human forkhead proteins: binding site specificity and DNA bending.</title>
        <authorList>
            <person name="Pierrou S."/>
            <person name="Hellqvist M."/>
            <person name="Samuelsson L."/>
            <person name="Enerbaeck S."/>
            <person name="Carlsson P."/>
        </authorList>
    </citation>
    <scope>NUCLEOTIDE SEQUENCE [GENOMIC DNA] OF 118-193</scope>
</reference>
<reference key="5">
    <citation type="journal article" date="2008" name="Proc. Natl. Acad. Sci. U.S.A.">
        <title>A quantitative atlas of mitotic phosphorylation.</title>
        <authorList>
            <person name="Dephoure N."/>
            <person name="Zhou C."/>
            <person name="Villen J."/>
            <person name="Beausoleil S.A."/>
            <person name="Bakalarski C.E."/>
            <person name="Elledge S.J."/>
            <person name="Gygi S.P."/>
        </authorList>
    </citation>
    <scope>IDENTIFICATION BY MASS SPECTROMETRY [LARGE SCALE ANALYSIS]</scope>
    <source>
        <tissue>Cervix carcinoma</tissue>
    </source>
</reference>
<dbReference type="EMBL" id="BC029778">
    <property type="protein sequence ID" value="AAH29778.2"/>
    <property type="molecule type" value="mRNA"/>
</dbReference>
<dbReference type="EMBL" id="L13203">
    <property type="protein sequence ID" value="AAB50574.1"/>
    <property type="status" value="ALT_INIT"/>
    <property type="molecule type" value="mRNA"/>
</dbReference>
<dbReference type="EMBL" id="AY707089">
    <property type="protein sequence ID" value="AAU12169.1"/>
    <property type="status" value="ALT_INIT"/>
    <property type="molecule type" value="mRNA"/>
</dbReference>
<dbReference type="EMBL" id="U13224">
    <property type="protein sequence ID" value="AAA92041.1"/>
    <property type="molecule type" value="Genomic_DNA"/>
</dbReference>
<dbReference type="CCDS" id="CCDS4372.1">
    <molecule id="Q12951-1"/>
</dbReference>
<dbReference type="CCDS" id="CCDS47337.1">
    <molecule id="Q12951-2"/>
</dbReference>
<dbReference type="PIR" id="A47450">
    <property type="entry name" value="A47450"/>
</dbReference>
<dbReference type="PIR" id="S51629">
    <property type="entry name" value="S51629"/>
</dbReference>
<dbReference type="RefSeq" id="NP_036320.2">
    <molecule id="Q12951-1"/>
    <property type="nucleotide sequence ID" value="NM_012188.4"/>
</dbReference>
<dbReference type="RefSeq" id="NP_658982.1">
    <molecule id="Q12951-2"/>
    <property type="nucleotide sequence ID" value="NM_144769.4"/>
</dbReference>
<dbReference type="SMR" id="Q12951"/>
<dbReference type="BioGRID" id="108588">
    <property type="interactions" value="91"/>
</dbReference>
<dbReference type="FunCoup" id="Q12951">
    <property type="interactions" value="441"/>
</dbReference>
<dbReference type="IntAct" id="Q12951">
    <property type="interactions" value="92"/>
</dbReference>
<dbReference type="MINT" id="Q12951"/>
<dbReference type="STRING" id="9606.ENSP00000304286"/>
<dbReference type="GlyGen" id="Q12951">
    <property type="glycosylation" value="1 site"/>
</dbReference>
<dbReference type="iPTMnet" id="Q12951"/>
<dbReference type="PhosphoSitePlus" id="Q12951"/>
<dbReference type="BioMuta" id="FOXI1"/>
<dbReference type="DMDM" id="150421552"/>
<dbReference type="MassIVE" id="Q12951"/>
<dbReference type="PaxDb" id="9606-ENSP00000304286"/>
<dbReference type="PeptideAtlas" id="Q12951"/>
<dbReference type="Antibodypedia" id="28812">
    <property type="antibodies" value="519 antibodies from 30 providers"/>
</dbReference>
<dbReference type="DNASU" id="2299"/>
<dbReference type="Ensembl" id="ENST00000306268.8">
    <molecule id="Q12951-1"/>
    <property type="protein sequence ID" value="ENSP00000304286.5"/>
    <property type="gene ID" value="ENSG00000168269.10"/>
</dbReference>
<dbReference type="Ensembl" id="ENST00000449804.4">
    <molecule id="Q12951-2"/>
    <property type="protein sequence ID" value="ENSP00000415483.2"/>
    <property type="gene ID" value="ENSG00000168269.10"/>
</dbReference>
<dbReference type="GeneID" id="2299"/>
<dbReference type="KEGG" id="hsa:2299"/>
<dbReference type="MANE-Select" id="ENST00000306268.8">
    <property type="protein sequence ID" value="ENSP00000304286.5"/>
    <property type="RefSeq nucleotide sequence ID" value="NM_012188.5"/>
    <property type="RefSeq protein sequence ID" value="NP_036320.2"/>
</dbReference>
<dbReference type="UCSC" id="uc003mai.5">
    <molecule id="Q12951-1"/>
    <property type="organism name" value="human"/>
</dbReference>
<dbReference type="AGR" id="HGNC:3815"/>
<dbReference type="CTD" id="2299"/>
<dbReference type="DisGeNET" id="2299"/>
<dbReference type="GeneCards" id="FOXI1"/>
<dbReference type="GeneReviews" id="FOXI1"/>
<dbReference type="HGNC" id="HGNC:3815">
    <property type="gene designation" value="FOXI1"/>
</dbReference>
<dbReference type="HPA" id="ENSG00000168269">
    <property type="expression patterns" value="Tissue enhanced (kidney, salivary gland)"/>
</dbReference>
<dbReference type="MalaCards" id="FOXI1"/>
<dbReference type="MIM" id="601093">
    <property type="type" value="gene"/>
</dbReference>
<dbReference type="neXtProt" id="NX_Q12951"/>
<dbReference type="OpenTargets" id="ENSG00000168269"/>
<dbReference type="Orphanet" id="402041">
    <property type="disease" value="Autosomal recessive distal renal tubular acidosis"/>
</dbReference>
<dbReference type="Orphanet" id="705">
    <property type="disease" value="Pendred syndrome"/>
</dbReference>
<dbReference type="PharmGKB" id="PA28232"/>
<dbReference type="VEuPathDB" id="HostDB:ENSG00000168269"/>
<dbReference type="eggNOG" id="KOG2294">
    <property type="taxonomic scope" value="Eukaryota"/>
</dbReference>
<dbReference type="GeneTree" id="ENSGT00940000161316"/>
<dbReference type="HOGENOM" id="CLU_046860_1_0_1"/>
<dbReference type="InParanoid" id="Q12951"/>
<dbReference type="OMA" id="PQAYSMQ"/>
<dbReference type="OrthoDB" id="5402974at2759"/>
<dbReference type="PAN-GO" id="Q12951">
    <property type="GO annotations" value="5 GO annotations based on evolutionary models"/>
</dbReference>
<dbReference type="PhylomeDB" id="Q12951"/>
<dbReference type="TreeFam" id="TF316127"/>
<dbReference type="PathwayCommons" id="Q12951"/>
<dbReference type="SignaLink" id="Q12951"/>
<dbReference type="SIGNOR" id="Q12951"/>
<dbReference type="BioGRID-ORCS" id="2299">
    <property type="hits" value="14 hits in 1170 CRISPR screens"/>
</dbReference>
<dbReference type="ChiTaRS" id="FOXI1">
    <property type="organism name" value="human"/>
</dbReference>
<dbReference type="GeneWiki" id="FOXI1"/>
<dbReference type="GenomeRNAi" id="2299"/>
<dbReference type="Pharos" id="Q12951">
    <property type="development level" value="Tbio"/>
</dbReference>
<dbReference type="PRO" id="PR:Q12951"/>
<dbReference type="Proteomes" id="UP000005640">
    <property type="component" value="Chromosome 5"/>
</dbReference>
<dbReference type="RNAct" id="Q12951">
    <property type="molecule type" value="protein"/>
</dbReference>
<dbReference type="Bgee" id="ENSG00000168269">
    <property type="expression patterns" value="Expressed in metanephros cortex and 31 other cell types or tissues"/>
</dbReference>
<dbReference type="ExpressionAtlas" id="Q12951">
    <property type="expression patterns" value="baseline and differential"/>
</dbReference>
<dbReference type="GO" id="GO:0000785">
    <property type="term" value="C:chromatin"/>
    <property type="evidence" value="ECO:0000247"/>
    <property type="project" value="NTNU_SB"/>
</dbReference>
<dbReference type="GO" id="GO:0043231">
    <property type="term" value="C:intracellular membrane-bounded organelle"/>
    <property type="evidence" value="ECO:0000314"/>
    <property type="project" value="HPA"/>
</dbReference>
<dbReference type="GO" id="GO:0005730">
    <property type="term" value="C:nucleolus"/>
    <property type="evidence" value="ECO:0000314"/>
    <property type="project" value="HPA"/>
</dbReference>
<dbReference type="GO" id="GO:0005634">
    <property type="term" value="C:nucleus"/>
    <property type="evidence" value="ECO:0000305"/>
    <property type="project" value="UniProtKB"/>
</dbReference>
<dbReference type="GO" id="GO:0008301">
    <property type="term" value="F:DNA binding, bending"/>
    <property type="evidence" value="ECO:0000303"/>
    <property type="project" value="UniProtKB"/>
</dbReference>
<dbReference type="GO" id="GO:0001228">
    <property type="term" value="F:DNA-binding transcription activator activity, RNA polymerase II-specific"/>
    <property type="evidence" value="ECO:0000314"/>
    <property type="project" value="NTNU_SB"/>
</dbReference>
<dbReference type="GO" id="GO:0003700">
    <property type="term" value="F:DNA-binding transcription factor activity"/>
    <property type="evidence" value="ECO:0000314"/>
    <property type="project" value="UniProtKB"/>
</dbReference>
<dbReference type="GO" id="GO:0000981">
    <property type="term" value="F:DNA-binding transcription factor activity, RNA polymerase II-specific"/>
    <property type="evidence" value="ECO:0000247"/>
    <property type="project" value="NTNU_SB"/>
</dbReference>
<dbReference type="GO" id="GO:0000978">
    <property type="term" value="F:RNA polymerase II cis-regulatory region sequence-specific DNA binding"/>
    <property type="evidence" value="ECO:0000314"/>
    <property type="project" value="NTNU_SB"/>
</dbReference>
<dbReference type="GO" id="GO:0043565">
    <property type="term" value="F:sequence-specific DNA binding"/>
    <property type="evidence" value="ECO:0000250"/>
    <property type="project" value="UniProtKB"/>
</dbReference>
<dbReference type="GO" id="GO:1990837">
    <property type="term" value="F:sequence-specific double-stranded DNA binding"/>
    <property type="evidence" value="ECO:0000314"/>
    <property type="project" value="ARUK-UCL"/>
</dbReference>
<dbReference type="GO" id="GO:0000976">
    <property type="term" value="F:transcription cis-regulatory region binding"/>
    <property type="evidence" value="ECO:0000250"/>
    <property type="project" value="UniProtKB"/>
</dbReference>
<dbReference type="GO" id="GO:0009653">
    <property type="term" value="P:anatomical structure morphogenesis"/>
    <property type="evidence" value="ECO:0000318"/>
    <property type="project" value="GO_Central"/>
</dbReference>
<dbReference type="GO" id="GO:0030154">
    <property type="term" value="P:cell differentiation"/>
    <property type="evidence" value="ECO:0000318"/>
    <property type="project" value="GO_Central"/>
</dbReference>
<dbReference type="GO" id="GO:0009792">
    <property type="term" value="P:embryo development ending in birth or egg hatching"/>
    <property type="evidence" value="ECO:0000303"/>
    <property type="project" value="UniProtKB"/>
</dbReference>
<dbReference type="GO" id="GO:0042472">
    <property type="term" value="P:inner ear morphogenesis"/>
    <property type="evidence" value="ECO:0007669"/>
    <property type="project" value="Ensembl"/>
</dbReference>
<dbReference type="GO" id="GO:0045944">
    <property type="term" value="P:positive regulation of transcription by RNA polymerase II"/>
    <property type="evidence" value="ECO:0000314"/>
    <property type="project" value="UniProtKB"/>
</dbReference>
<dbReference type="GO" id="GO:0006357">
    <property type="term" value="P:regulation of transcription by RNA polymerase II"/>
    <property type="evidence" value="ECO:0000318"/>
    <property type="project" value="GO_Central"/>
</dbReference>
<dbReference type="CDD" id="cd20053">
    <property type="entry name" value="FH_FOXI1"/>
    <property type="match status" value="1"/>
</dbReference>
<dbReference type="FunFam" id="1.10.10.10:FF:000016">
    <property type="entry name" value="Forkhead box protein I1"/>
    <property type="match status" value="1"/>
</dbReference>
<dbReference type="Gene3D" id="1.10.10.10">
    <property type="entry name" value="Winged helix-like DNA-binding domain superfamily/Winged helix DNA-binding domain"/>
    <property type="match status" value="1"/>
</dbReference>
<dbReference type="InterPro" id="IPR001766">
    <property type="entry name" value="Fork_head_dom"/>
</dbReference>
<dbReference type="InterPro" id="IPR050211">
    <property type="entry name" value="FOX_domain-containing"/>
</dbReference>
<dbReference type="InterPro" id="IPR018122">
    <property type="entry name" value="TF_fork_head_CS_1"/>
</dbReference>
<dbReference type="InterPro" id="IPR030456">
    <property type="entry name" value="TF_fork_head_CS_2"/>
</dbReference>
<dbReference type="InterPro" id="IPR036388">
    <property type="entry name" value="WH-like_DNA-bd_sf"/>
</dbReference>
<dbReference type="InterPro" id="IPR036390">
    <property type="entry name" value="WH_DNA-bd_sf"/>
</dbReference>
<dbReference type="PANTHER" id="PTHR11829">
    <property type="entry name" value="FORKHEAD BOX PROTEIN"/>
    <property type="match status" value="1"/>
</dbReference>
<dbReference type="PANTHER" id="PTHR11829:SF180">
    <property type="entry name" value="FORKHEAD BOX PROTEIN I1"/>
    <property type="match status" value="1"/>
</dbReference>
<dbReference type="Pfam" id="PF00250">
    <property type="entry name" value="Forkhead"/>
    <property type="match status" value="1"/>
</dbReference>
<dbReference type="PRINTS" id="PR00053">
    <property type="entry name" value="FORKHEAD"/>
</dbReference>
<dbReference type="SMART" id="SM00339">
    <property type="entry name" value="FH"/>
    <property type="match status" value="1"/>
</dbReference>
<dbReference type="SUPFAM" id="SSF46785">
    <property type="entry name" value="Winged helix' DNA-binding domain"/>
    <property type="match status" value="1"/>
</dbReference>
<dbReference type="PROSITE" id="PS00657">
    <property type="entry name" value="FORK_HEAD_1"/>
    <property type="match status" value="1"/>
</dbReference>
<dbReference type="PROSITE" id="PS00658">
    <property type="entry name" value="FORK_HEAD_2"/>
    <property type="match status" value="1"/>
</dbReference>
<dbReference type="PROSITE" id="PS50039">
    <property type="entry name" value="FORK_HEAD_3"/>
    <property type="match status" value="1"/>
</dbReference>
<organism>
    <name type="scientific">Homo sapiens</name>
    <name type="common">Human</name>
    <dbReference type="NCBI Taxonomy" id="9606"/>
    <lineage>
        <taxon>Eukaryota</taxon>
        <taxon>Metazoa</taxon>
        <taxon>Chordata</taxon>
        <taxon>Craniata</taxon>
        <taxon>Vertebrata</taxon>
        <taxon>Euteleostomi</taxon>
        <taxon>Mammalia</taxon>
        <taxon>Eutheria</taxon>
        <taxon>Euarchontoglires</taxon>
        <taxon>Primates</taxon>
        <taxon>Haplorrhini</taxon>
        <taxon>Catarrhini</taxon>
        <taxon>Hominidae</taxon>
        <taxon>Homo</taxon>
    </lineage>
</organism>
<accession>Q12951</accession>
<accession>Q14518</accession>
<accession>Q66SR7</accession>
<accession>Q8N6L8</accession>
<keyword id="KW-0010">Activator</keyword>
<keyword id="KW-0025">Alternative splicing</keyword>
<keyword id="KW-0238">DNA-binding</keyword>
<keyword id="KW-0539">Nucleus</keyword>
<keyword id="KW-1267">Proteomics identification</keyword>
<keyword id="KW-1185">Reference proteome</keyword>
<keyword id="KW-0804">Transcription</keyword>
<keyword id="KW-0805">Transcription regulation</keyword>